<proteinExistence type="evidence at transcript level"/>
<dbReference type="EMBL" id="X69944">
    <property type="protein sequence ID" value="CAA49564.1"/>
    <property type="molecule type" value="mRNA"/>
</dbReference>
<dbReference type="EMBL" id="X69944">
    <property type="protein sequence ID" value="CAA49565.1"/>
    <property type="molecule type" value="mRNA"/>
</dbReference>
<dbReference type="EMBL" id="X69944">
    <property type="protein sequence ID" value="CAA49562.1"/>
    <property type="status" value="ALT_INIT"/>
    <property type="molecule type" value="mRNA"/>
</dbReference>
<dbReference type="EMBL" id="X69945">
    <property type="protein sequence ID" value="CAA49566.1"/>
    <property type="molecule type" value="mRNA"/>
</dbReference>
<dbReference type="EMBL" id="X17586">
    <property type="protein sequence ID" value="CAA35603.1"/>
    <property type="molecule type" value="mRNA"/>
</dbReference>
<dbReference type="PIR" id="S06124">
    <property type="entry name" value="S06124"/>
</dbReference>
<dbReference type="PIR" id="S31516">
    <property type="entry name" value="S31516"/>
</dbReference>
<dbReference type="SMR" id="P18516"/>
<dbReference type="GO" id="GO:0005634">
    <property type="term" value="C:nucleus"/>
    <property type="evidence" value="ECO:0007669"/>
    <property type="project" value="UniProtKB-SubCell"/>
</dbReference>
<dbReference type="GO" id="GO:0005667">
    <property type="term" value="C:transcription regulator complex"/>
    <property type="evidence" value="ECO:0007669"/>
    <property type="project" value="TreeGrafter"/>
</dbReference>
<dbReference type="GO" id="GO:0035259">
    <property type="term" value="F:nuclear glucocorticoid receptor binding"/>
    <property type="evidence" value="ECO:0007669"/>
    <property type="project" value="TreeGrafter"/>
</dbReference>
<dbReference type="GO" id="GO:0004879">
    <property type="term" value="F:nuclear receptor activity"/>
    <property type="evidence" value="ECO:0007669"/>
    <property type="project" value="InterPro"/>
</dbReference>
<dbReference type="GO" id="GO:0000978">
    <property type="term" value="F:RNA polymerase II cis-regulatory region sequence-specific DNA binding"/>
    <property type="evidence" value="ECO:0007669"/>
    <property type="project" value="TreeGrafter"/>
</dbReference>
<dbReference type="GO" id="GO:0008270">
    <property type="term" value="F:zinc ion binding"/>
    <property type="evidence" value="ECO:0007669"/>
    <property type="project" value="UniProtKB-KW"/>
</dbReference>
<dbReference type="GO" id="GO:0071376">
    <property type="term" value="P:cellular response to corticotropin-releasing hormone stimulus"/>
    <property type="evidence" value="ECO:0007669"/>
    <property type="project" value="TreeGrafter"/>
</dbReference>
<dbReference type="GO" id="GO:0048384">
    <property type="term" value="P:retinoic acid receptor signaling pathway"/>
    <property type="evidence" value="ECO:0007669"/>
    <property type="project" value="InterPro"/>
</dbReference>
<dbReference type="CDD" id="cd06964">
    <property type="entry name" value="NR_DBD_RAR"/>
    <property type="match status" value="1"/>
</dbReference>
<dbReference type="CDD" id="cd06937">
    <property type="entry name" value="NR_LBD_RAR"/>
    <property type="match status" value="1"/>
</dbReference>
<dbReference type="FunFam" id="1.10.565.10:FF:000001">
    <property type="entry name" value="Retinoic acid receptor beta isoform"/>
    <property type="match status" value="1"/>
</dbReference>
<dbReference type="FunFam" id="3.30.50.10:FF:000004">
    <property type="entry name" value="Retinoic acid receptor beta isoform"/>
    <property type="match status" value="1"/>
</dbReference>
<dbReference type="Gene3D" id="3.30.50.10">
    <property type="entry name" value="Erythroid Transcription Factor GATA-1, subunit A"/>
    <property type="match status" value="1"/>
</dbReference>
<dbReference type="Gene3D" id="1.10.565.10">
    <property type="entry name" value="Retinoid X Receptor"/>
    <property type="match status" value="1"/>
</dbReference>
<dbReference type="InterPro" id="IPR035500">
    <property type="entry name" value="NHR-like_dom_sf"/>
</dbReference>
<dbReference type="InterPro" id="IPR047159">
    <property type="entry name" value="NR_DBD_RAR"/>
</dbReference>
<dbReference type="InterPro" id="IPR047158">
    <property type="entry name" value="NR_LBD_RAR"/>
</dbReference>
<dbReference type="InterPro" id="IPR000536">
    <property type="entry name" value="Nucl_hrmn_rcpt_lig-bd"/>
</dbReference>
<dbReference type="InterPro" id="IPR001723">
    <property type="entry name" value="Nuclear_hrmn_rcpt"/>
</dbReference>
<dbReference type="InterPro" id="IPR003078">
    <property type="entry name" value="Retinoic_acid_rcpt"/>
</dbReference>
<dbReference type="InterPro" id="IPR001628">
    <property type="entry name" value="Znf_hrmn_rcpt"/>
</dbReference>
<dbReference type="InterPro" id="IPR013088">
    <property type="entry name" value="Znf_NHR/GATA"/>
</dbReference>
<dbReference type="PANTHER" id="PTHR24085">
    <property type="entry name" value="NUCLEAR HORMONE RECEPTOR"/>
    <property type="match status" value="1"/>
</dbReference>
<dbReference type="PANTHER" id="PTHR24085:SF7">
    <property type="entry name" value="RETINOIC ACID RECEPTOR GAMMA"/>
    <property type="match status" value="1"/>
</dbReference>
<dbReference type="Pfam" id="PF00104">
    <property type="entry name" value="Hormone_recep"/>
    <property type="match status" value="1"/>
</dbReference>
<dbReference type="Pfam" id="PF00105">
    <property type="entry name" value="zf-C4"/>
    <property type="match status" value="1"/>
</dbReference>
<dbReference type="PRINTS" id="PR01292">
    <property type="entry name" value="RETNOICACIDR"/>
</dbReference>
<dbReference type="PRINTS" id="PR00398">
    <property type="entry name" value="STRDHORMONER"/>
</dbReference>
<dbReference type="PRINTS" id="PR00047">
    <property type="entry name" value="STROIDFINGER"/>
</dbReference>
<dbReference type="SMART" id="SM00430">
    <property type="entry name" value="HOLI"/>
    <property type="match status" value="1"/>
</dbReference>
<dbReference type="SMART" id="SM00399">
    <property type="entry name" value="ZnF_C4"/>
    <property type="match status" value="1"/>
</dbReference>
<dbReference type="SUPFAM" id="SSF57716">
    <property type="entry name" value="Glucocorticoid receptor-like (DNA-binding domain)"/>
    <property type="match status" value="1"/>
</dbReference>
<dbReference type="SUPFAM" id="SSF48508">
    <property type="entry name" value="Nuclear receptor ligand-binding domain"/>
    <property type="match status" value="1"/>
</dbReference>
<dbReference type="PROSITE" id="PS51843">
    <property type="entry name" value="NR_LBD"/>
    <property type="match status" value="1"/>
</dbReference>
<dbReference type="PROSITE" id="PS00031">
    <property type="entry name" value="NUCLEAR_REC_DBD_1"/>
    <property type="match status" value="1"/>
</dbReference>
<dbReference type="PROSITE" id="PS51030">
    <property type="entry name" value="NUCLEAR_REC_DBD_2"/>
    <property type="match status" value="1"/>
</dbReference>
<protein>
    <recommendedName>
        <fullName>Retinoic acid receptor gamma</fullName>
        <shortName>RAR-gamma</shortName>
    </recommendedName>
    <alternativeName>
        <fullName>Nuclear receptor subfamily 1 group B member 3</fullName>
    </alternativeName>
    <alternativeName>
        <fullName>Retinoic acid receptor delta</fullName>
        <shortName>RAR-delta</shortName>
    </alternativeName>
</protein>
<accession>P18516</accession>
<accession>Q04643</accession>
<organism>
    <name type="scientific">Notophthalmus viridescens</name>
    <name type="common">Eastern newt</name>
    <name type="synonym">Triturus viridescens</name>
    <dbReference type="NCBI Taxonomy" id="8316"/>
    <lineage>
        <taxon>Eukaryota</taxon>
        <taxon>Metazoa</taxon>
        <taxon>Chordata</taxon>
        <taxon>Craniata</taxon>
        <taxon>Vertebrata</taxon>
        <taxon>Euteleostomi</taxon>
        <taxon>Amphibia</taxon>
        <taxon>Batrachia</taxon>
        <taxon>Caudata</taxon>
        <taxon>Salamandroidea</taxon>
        <taxon>Salamandridae</taxon>
        <taxon>Pleurodelinae</taxon>
        <taxon>Notophthalmus</taxon>
    </lineage>
</organism>
<sequence>MMKFSDTASCRDGGERPEEEGKGAGGRSKLRMGKEEFTGSVGKEEAAAVASMSSSKDRICSTSTQLSQLHGFPPSMYPFAFSSNMRGSPPFDLTNGGAYFRSFPTDLPKEMASLSVETQSTSSEEMVPSSPSPPPPPRVYKPCFVCNDKSSGYHYGVSSCEGCKGFFRRSIQKNMVYTCHRDKNCQINKVTRNRCQYCRLQKCFEVGMSKEAVRNDRNKKKKEIKEEVVTDSYEMPPEMEALIQKVSKAHQETFPSLCQLGKYTTNSSADHRVQLDLGLWHKFSELATKCIIKIVEFAKRLPGFATLTIADQITLLKAACLDILMLRICTRYTPEQDTMTFSDGLTLNRTQMHNAGFGPLTDLVFAFAEQLLPLEMDDTETGLLSAICLICGDRMDLEEPEKVDKLQEPLLEALKIYARRRRPNKPYMFPRMLMKITDLRGISTKGAERAITLKMEIPGPMPPLIREMLENPEAFEDDASPPPKSEQKPIKVEEKPGEKTSTKDP</sequence>
<comment type="function">
    <text evidence="1">Receptor for retinoic acid. Retinoic acid receptors bind as heterodimers to their target response elements in response to their ligands, all-trans or 9-cis retinoic acid, and regulate gene expression in various biological processes. The RAR/RXR heterodimers bind to the retinoic acid response elements (RARE) composed of tandem 5'-AGGTCA-3' sites known as DR1-DR5 (By similarity).</text>
</comment>
<comment type="subunit">
    <text evidence="1">Heterodimer; with a RXR molecule. Binds DNA preferentially as a RAR/RXR heterodimer.</text>
</comment>
<comment type="subcellular location">
    <subcellularLocation>
        <location evidence="2">Nucleus</location>
    </subcellularLocation>
</comment>
<comment type="alternative products">
    <event type="alternative splicing"/>
    <event type="alternative initiation"/>
    <isoform>
        <id>P18516-1</id>
        <name>Delta-1A</name>
        <sequence type="displayed"/>
    </isoform>
    <isoform>
        <id>P18516-2</id>
        <name>Delta-2</name>
        <sequence type="described" ref="VSP_003643"/>
    </isoform>
    <isoform>
        <id>P18516-3</id>
        <name>Delta-1B</name>
        <sequence type="described" ref="VSP_018770"/>
    </isoform>
</comment>
<comment type="tissue specificity">
    <text evidence="5">Isoform Delta-1A and Isoform Delta-1B are most abundant in regenerating limbs, tails, and the anterior half of the lower jaw. Isoform Delta-2 is broadly and uniformly distributed.</text>
</comment>
<comment type="domain">
    <text>Composed of three domains: a modulating N-terminal domain, a DNA-binding domain and a C-terminal ligand-binding domain.</text>
</comment>
<comment type="miscellaneous">
    <molecule>Isoform Delta-1B</molecule>
    <text evidence="8">Produced by alternative initiation at Met-52 of isoform Delta-1A.</text>
</comment>
<comment type="similarity">
    <text evidence="8">Belongs to the nuclear hormone receptor family. NR1 subfamily.</text>
</comment>
<comment type="sequence caution" evidence="8">
    <conflict type="erroneous initiation">
        <sequence resource="EMBL-CDS" id="CAA49562"/>
    </conflict>
    <text>Extended N-terminus.</text>
</comment>
<name>RARG_NOTVI</name>
<evidence type="ECO:0000250" key="1"/>
<evidence type="ECO:0000255" key="2">
    <source>
        <dbReference type="PROSITE-ProRule" id="PRU00407"/>
    </source>
</evidence>
<evidence type="ECO:0000255" key="3">
    <source>
        <dbReference type="PROSITE-ProRule" id="PRU01189"/>
    </source>
</evidence>
<evidence type="ECO:0000256" key="4">
    <source>
        <dbReference type="SAM" id="MobiDB-lite"/>
    </source>
</evidence>
<evidence type="ECO:0000269" key="5">
    <source>
    </source>
</evidence>
<evidence type="ECO:0000303" key="6">
    <source>
    </source>
</evidence>
<evidence type="ECO:0000303" key="7">
    <source>
    </source>
</evidence>
<evidence type="ECO:0000305" key="8"/>
<keyword id="KW-0024">Alternative initiation</keyword>
<keyword id="KW-0025">Alternative splicing</keyword>
<keyword id="KW-0238">DNA-binding</keyword>
<keyword id="KW-0479">Metal-binding</keyword>
<keyword id="KW-0539">Nucleus</keyword>
<keyword id="KW-0675">Receptor</keyword>
<keyword id="KW-0804">Transcription</keyword>
<keyword id="KW-0805">Transcription regulation</keyword>
<keyword id="KW-0862">Zinc</keyword>
<keyword id="KW-0863">Zinc-finger</keyword>
<gene>
    <name type="primary">RARG</name>
    <name type="synonym">NR1B3</name>
</gene>
<reference key="1">
    <citation type="journal article" date="1993" name="Mech. Dev.">
        <title>Delta retinoic acid receptor isoform delta 1 is distinguished by its exceptional N-terminal sequence and abundance in the limb regeneration blastema.</title>
        <authorList>
            <person name="Ragsdale C.W. Jr."/>
            <person name="Gates P.B."/>
            <person name="Hill D.S."/>
            <person name="Brockes J.P."/>
        </authorList>
    </citation>
    <scope>NUCLEOTIDE SEQUENCE [MRNA] (ISOFORMS DELTA-1A; DELTA-1B AND DELTA-2)</scope>
    <scope>TISSUE SPECIFICITY</scope>
    <scope>DEVELOPMENTAL STAGE</scope>
    <source>
        <tissue>Tail</tissue>
    </source>
</reference>
<reference key="2">
    <citation type="journal article" date="1989" name="Nature">
        <title>Identification of a novel retinoic acid receptor in regenerative tissues of the newt.</title>
        <authorList>
            <person name="Ragsdale C.W. Jr."/>
            <person name="Petkovich M."/>
            <person name="Gates P.B."/>
            <person name="Chambon P."/>
            <person name="Brockes J.P."/>
        </authorList>
    </citation>
    <scope>NUCLEOTIDE SEQUENCE [MRNA] (ISOFORM DELTA-1B)</scope>
</reference>
<reference key="3">
    <citation type="journal article" date="1989" name="Nature">
        <title>Spatial and temporal expression of the retinoic acid receptor in the regenerating amphibian limb.</title>
        <authorList>
            <person name="Giguere V."/>
            <person name="Ong E.S."/>
            <person name="Evans R.M."/>
            <person name="Tabin C.J."/>
        </authorList>
    </citation>
    <scope>PARTIAL NUCLEOTIDE SEQUENCE [MRNA]</scope>
</reference>
<feature type="chain" id="PRO_0000019931" description="Retinoic acid receptor gamma">
    <location>
        <begin position="1"/>
        <end position="505"/>
    </location>
</feature>
<feature type="domain" description="NR LBD" evidence="3">
    <location>
        <begin position="238"/>
        <end position="472"/>
    </location>
</feature>
<feature type="DNA-binding region" description="Nuclear receptor" evidence="2">
    <location>
        <begin position="143"/>
        <end position="208"/>
    </location>
</feature>
<feature type="zinc finger region" description="NR C4-type" evidence="2">
    <location>
        <begin position="143"/>
        <end position="163"/>
    </location>
</feature>
<feature type="zinc finger region" description="NR C4-type" evidence="2">
    <location>
        <begin position="179"/>
        <end position="203"/>
    </location>
</feature>
<feature type="region of interest" description="Disordered" evidence="4">
    <location>
        <begin position="1"/>
        <end position="57"/>
    </location>
</feature>
<feature type="region of interest" description="Modulating">
    <location>
        <begin position="52"/>
        <end position="142"/>
    </location>
</feature>
<feature type="region of interest" description="Disordered" evidence="4">
    <location>
        <begin position="113"/>
        <end position="134"/>
    </location>
</feature>
<feature type="region of interest" description="Hinge">
    <location>
        <begin position="209"/>
        <end position="237"/>
    </location>
</feature>
<feature type="region of interest" description="Disordered" evidence="4">
    <location>
        <begin position="462"/>
        <end position="505"/>
    </location>
</feature>
<feature type="compositionally biased region" description="Basic and acidic residues" evidence="4">
    <location>
        <begin position="12"/>
        <end position="22"/>
    </location>
</feature>
<feature type="compositionally biased region" description="Basic and acidic residues" evidence="4">
    <location>
        <begin position="32"/>
        <end position="46"/>
    </location>
</feature>
<feature type="compositionally biased region" description="Polar residues" evidence="4">
    <location>
        <begin position="115"/>
        <end position="124"/>
    </location>
</feature>
<feature type="compositionally biased region" description="Basic and acidic residues" evidence="4">
    <location>
        <begin position="485"/>
        <end position="505"/>
    </location>
</feature>
<feature type="splice variant" id="VSP_003643" description="In isoform Delta-2." evidence="7">
    <original>MMKFSDTASCRDGGERPEEEGKGAGGRSKLRMGKEEFTGSVGKEEAAAVASMSSSKDRICSTSTQLSQLHGFPPSMYPFAFSSNMRGSPPFDLTNGGAYFRSFPTDLPKEMASL</original>
    <variation>MYDCMEAFMLAPHPLYDVTNPGACMLRKARLSPCFGGLDPFGWPQPASLQ</variation>
    <location>
        <begin position="1"/>
        <end position="114"/>
    </location>
</feature>
<feature type="splice variant" id="VSP_018770" description="In isoform Delta-1B." evidence="6 7">
    <location>
        <begin position="1"/>
        <end position="51"/>
    </location>
</feature>
<feature type="sequence conflict" description="In Ref. 3." evidence="8" ref="3">
    <original>H</original>
    <variation>D</variation>
    <location>
        <position position="281"/>
    </location>
</feature>
<feature type="sequence conflict" description="In Ref. 3." evidence="8" ref="3">
    <original>G</original>
    <variation>S</variation>
    <location>
        <position position="303"/>
    </location>
</feature>
<feature type="sequence conflict" description="In Ref. 3." evidence="8" ref="3">
    <original>G</original>
    <variation>A</variation>
    <location>
        <position position="497"/>
    </location>
</feature>